<keyword id="KW-1185">Reference proteome</keyword>
<evidence type="ECO:0000256" key="1">
    <source>
        <dbReference type="SAM" id="MobiDB-lite"/>
    </source>
</evidence>
<accession>P9WM85</accession>
<accession>L0T5J0</accession>
<accession>P64677</accession>
<accession>P71706</accession>
<organism>
    <name type="scientific">Mycobacterium tuberculosis (strain ATCC 25618 / H37Rv)</name>
    <dbReference type="NCBI Taxonomy" id="83332"/>
    <lineage>
        <taxon>Bacteria</taxon>
        <taxon>Bacillati</taxon>
        <taxon>Actinomycetota</taxon>
        <taxon>Actinomycetes</taxon>
        <taxon>Mycobacteriales</taxon>
        <taxon>Mycobacteriaceae</taxon>
        <taxon>Mycobacterium</taxon>
        <taxon>Mycobacterium tuberculosis complex</taxon>
    </lineage>
</organism>
<sequence>MDYTLRRRSLLAEVYSGRTGVSEVCDANPYLLRAAKFHGKPSRVICPICRKEQLTLVSWVFGEHLGAVSGSARTAEELILLATRFSEFAVHVVEVCRTCSWNHLVKSYVLGAARPARPPRGSGGTRTARNGARTASE</sequence>
<proteinExistence type="evidence at protein level"/>
<dbReference type="EMBL" id="AL123456">
    <property type="protein sequence ID" value="CCP42771.1"/>
    <property type="molecule type" value="Genomic_DNA"/>
</dbReference>
<dbReference type="PIR" id="A70913">
    <property type="entry name" value="A70913"/>
</dbReference>
<dbReference type="RefSeq" id="NP_214563.1">
    <property type="nucleotide sequence ID" value="NC_000962.3"/>
</dbReference>
<dbReference type="RefSeq" id="WP_003400504.1">
    <property type="nucleotide sequence ID" value="NC_000962.3"/>
</dbReference>
<dbReference type="STRING" id="83332.Rv0049"/>
<dbReference type="PaxDb" id="83332-Rv0049"/>
<dbReference type="GeneID" id="887024"/>
<dbReference type="KEGG" id="mtu:Rv0049"/>
<dbReference type="KEGG" id="mtv:RVBD_0049"/>
<dbReference type="TubercuList" id="Rv0049"/>
<dbReference type="eggNOG" id="ENOG5032SMG">
    <property type="taxonomic scope" value="Bacteria"/>
</dbReference>
<dbReference type="InParanoid" id="P9WM85"/>
<dbReference type="OrthoDB" id="3531406at2"/>
<dbReference type="PhylomeDB" id="P9WM85"/>
<dbReference type="Proteomes" id="UP000001584">
    <property type="component" value="Chromosome"/>
</dbReference>
<dbReference type="InterPro" id="IPR035169">
    <property type="entry name" value="DUF5318"/>
</dbReference>
<dbReference type="Pfam" id="PF17249">
    <property type="entry name" value="DUF5318"/>
    <property type="match status" value="1"/>
</dbReference>
<protein>
    <recommendedName>
        <fullName>Uncharacterized protein Rv0049</fullName>
    </recommendedName>
</protein>
<feature type="chain" id="PRO_0000103658" description="Uncharacterized protein Rv0049">
    <location>
        <begin position="1"/>
        <end position="137"/>
    </location>
</feature>
<feature type="region of interest" description="Disordered" evidence="1">
    <location>
        <begin position="116"/>
        <end position="137"/>
    </location>
</feature>
<feature type="compositionally biased region" description="Polar residues" evidence="1">
    <location>
        <begin position="125"/>
        <end position="137"/>
    </location>
</feature>
<gene>
    <name type="ordered locus">Rv0049</name>
    <name type="ORF">MTCY21D4.12</name>
</gene>
<reference key="1">
    <citation type="journal article" date="1998" name="Nature">
        <title>Deciphering the biology of Mycobacterium tuberculosis from the complete genome sequence.</title>
        <authorList>
            <person name="Cole S.T."/>
            <person name="Brosch R."/>
            <person name="Parkhill J."/>
            <person name="Garnier T."/>
            <person name="Churcher C.M."/>
            <person name="Harris D.E."/>
            <person name="Gordon S.V."/>
            <person name="Eiglmeier K."/>
            <person name="Gas S."/>
            <person name="Barry C.E. III"/>
            <person name="Tekaia F."/>
            <person name="Badcock K."/>
            <person name="Basham D."/>
            <person name="Brown D."/>
            <person name="Chillingworth T."/>
            <person name="Connor R."/>
            <person name="Davies R.M."/>
            <person name="Devlin K."/>
            <person name="Feltwell T."/>
            <person name="Gentles S."/>
            <person name="Hamlin N."/>
            <person name="Holroyd S."/>
            <person name="Hornsby T."/>
            <person name="Jagels K."/>
            <person name="Krogh A."/>
            <person name="McLean J."/>
            <person name="Moule S."/>
            <person name="Murphy L.D."/>
            <person name="Oliver S."/>
            <person name="Osborne J."/>
            <person name="Quail M.A."/>
            <person name="Rajandream M.A."/>
            <person name="Rogers J."/>
            <person name="Rutter S."/>
            <person name="Seeger K."/>
            <person name="Skelton S."/>
            <person name="Squares S."/>
            <person name="Squares R."/>
            <person name="Sulston J.E."/>
            <person name="Taylor K."/>
            <person name="Whitehead S."/>
            <person name="Barrell B.G."/>
        </authorList>
    </citation>
    <scope>NUCLEOTIDE SEQUENCE [LARGE SCALE GENOMIC DNA]</scope>
    <source>
        <strain>ATCC 25618 / H37Rv</strain>
    </source>
</reference>
<reference key="2">
    <citation type="journal article" date="2011" name="Mol. Cell. Proteomics">
        <title>Proteogenomic analysis of Mycobacterium tuberculosis by high resolution mass spectrometry.</title>
        <authorList>
            <person name="Kelkar D.S."/>
            <person name="Kumar D."/>
            <person name="Kumar P."/>
            <person name="Balakrishnan L."/>
            <person name="Muthusamy B."/>
            <person name="Yadav A.K."/>
            <person name="Shrivastava P."/>
            <person name="Marimuthu A."/>
            <person name="Anand S."/>
            <person name="Sundaram H."/>
            <person name="Kingsbury R."/>
            <person name="Harsha H.C."/>
            <person name="Nair B."/>
            <person name="Prasad T.S."/>
            <person name="Chauhan D.S."/>
            <person name="Katoch K."/>
            <person name="Katoch V.M."/>
            <person name="Kumar P."/>
            <person name="Chaerkady R."/>
            <person name="Ramachandran S."/>
            <person name="Dash D."/>
            <person name="Pandey A."/>
        </authorList>
    </citation>
    <scope>IDENTIFICATION BY MASS SPECTROMETRY [LARGE SCALE ANALYSIS]</scope>
    <source>
        <strain>ATCC 25618 / H37Rv</strain>
    </source>
</reference>
<name>Y049_MYCTU</name>